<accession>B8I184</accession>
<comment type="catalytic activity">
    <reaction evidence="1">
        <text>GTP + H2O = 7,8-dihydroneopterin 3'-triphosphate + formate + H(+)</text>
        <dbReference type="Rhea" id="RHEA:17473"/>
        <dbReference type="ChEBI" id="CHEBI:15377"/>
        <dbReference type="ChEBI" id="CHEBI:15378"/>
        <dbReference type="ChEBI" id="CHEBI:15740"/>
        <dbReference type="ChEBI" id="CHEBI:37565"/>
        <dbReference type="ChEBI" id="CHEBI:58462"/>
        <dbReference type="EC" id="3.5.4.16"/>
    </reaction>
</comment>
<comment type="pathway">
    <text evidence="1">Cofactor biosynthesis; 7,8-dihydroneopterin triphosphate biosynthesis; 7,8-dihydroneopterin triphosphate from GTP: step 1/1.</text>
</comment>
<comment type="subunit">
    <text evidence="1">Homomer.</text>
</comment>
<comment type="similarity">
    <text evidence="1">Belongs to the GTP cyclohydrolase I family.</text>
</comment>
<proteinExistence type="inferred from homology"/>
<reference key="1">
    <citation type="submission" date="2009-01" db="EMBL/GenBank/DDBJ databases">
        <title>Complete sequence of Clostridium cellulolyticum H10.</title>
        <authorList>
            <consortium name="US DOE Joint Genome Institute"/>
            <person name="Lucas S."/>
            <person name="Copeland A."/>
            <person name="Lapidus A."/>
            <person name="Glavina del Rio T."/>
            <person name="Dalin E."/>
            <person name="Tice H."/>
            <person name="Bruce D."/>
            <person name="Goodwin L."/>
            <person name="Pitluck S."/>
            <person name="Chertkov O."/>
            <person name="Saunders E."/>
            <person name="Brettin T."/>
            <person name="Detter J.C."/>
            <person name="Han C."/>
            <person name="Larimer F."/>
            <person name="Land M."/>
            <person name="Hauser L."/>
            <person name="Kyrpides N."/>
            <person name="Ivanova N."/>
            <person name="Zhou J."/>
            <person name="Richardson P."/>
        </authorList>
    </citation>
    <scope>NUCLEOTIDE SEQUENCE [LARGE SCALE GENOMIC DNA]</scope>
    <source>
        <strain>ATCC 35319 / DSM 5812 / JCM 6584 / H10</strain>
    </source>
</reference>
<keyword id="KW-0342">GTP-binding</keyword>
<keyword id="KW-0378">Hydrolase</keyword>
<keyword id="KW-0479">Metal-binding</keyword>
<keyword id="KW-0547">Nucleotide-binding</keyword>
<keyword id="KW-0554">One-carbon metabolism</keyword>
<keyword id="KW-1185">Reference proteome</keyword>
<keyword id="KW-0862">Zinc</keyword>
<dbReference type="EC" id="3.5.4.16" evidence="1"/>
<dbReference type="EMBL" id="CP001348">
    <property type="protein sequence ID" value="ACL75682.1"/>
    <property type="molecule type" value="Genomic_DNA"/>
</dbReference>
<dbReference type="RefSeq" id="WP_015924830.1">
    <property type="nucleotide sequence ID" value="NC_011898.1"/>
</dbReference>
<dbReference type="SMR" id="B8I184"/>
<dbReference type="STRING" id="394503.Ccel_1328"/>
<dbReference type="KEGG" id="cce:Ccel_1328"/>
<dbReference type="eggNOG" id="COG0302">
    <property type="taxonomic scope" value="Bacteria"/>
</dbReference>
<dbReference type="HOGENOM" id="CLU_049768_3_2_9"/>
<dbReference type="OrthoDB" id="9801207at2"/>
<dbReference type="UniPathway" id="UPA00848">
    <property type="reaction ID" value="UER00151"/>
</dbReference>
<dbReference type="Proteomes" id="UP000001349">
    <property type="component" value="Chromosome"/>
</dbReference>
<dbReference type="GO" id="GO:0005737">
    <property type="term" value="C:cytoplasm"/>
    <property type="evidence" value="ECO:0007669"/>
    <property type="project" value="TreeGrafter"/>
</dbReference>
<dbReference type="GO" id="GO:0005525">
    <property type="term" value="F:GTP binding"/>
    <property type="evidence" value="ECO:0007669"/>
    <property type="project" value="UniProtKB-KW"/>
</dbReference>
<dbReference type="GO" id="GO:0003934">
    <property type="term" value="F:GTP cyclohydrolase I activity"/>
    <property type="evidence" value="ECO:0007669"/>
    <property type="project" value="UniProtKB-UniRule"/>
</dbReference>
<dbReference type="GO" id="GO:0008270">
    <property type="term" value="F:zinc ion binding"/>
    <property type="evidence" value="ECO:0007669"/>
    <property type="project" value="UniProtKB-UniRule"/>
</dbReference>
<dbReference type="GO" id="GO:0006730">
    <property type="term" value="P:one-carbon metabolic process"/>
    <property type="evidence" value="ECO:0007669"/>
    <property type="project" value="UniProtKB-UniRule"/>
</dbReference>
<dbReference type="GO" id="GO:0006729">
    <property type="term" value="P:tetrahydrobiopterin biosynthetic process"/>
    <property type="evidence" value="ECO:0007669"/>
    <property type="project" value="TreeGrafter"/>
</dbReference>
<dbReference type="GO" id="GO:0046654">
    <property type="term" value="P:tetrahydrofolate biosynthetic process"/>
    <property type="evidence" value="ECO:0007669"/>
    <property type="project" value="UniProtKB-UniRule"/>
</dbReference>
<dbReference type="FunFam" id="1.10.286.10:FF:000001">
    <property type="entry name" value="GTP cyclohydrolase 1"/>
    <property type="match status" value="1"/>
</dbReference>
<dbReference type="FunFam" id="3.30.1130.10:FF:000001">
    <property type="entry name" value="GTP cyclohydrolase 1"/>
    <property type="match status" value="1"/>
</dbReference>
<dbReference type="Gene3D" id="1.10.286.10">
    <property type="match status" value="1"/>
</dbReference>
<dbReference type="Gene3D" id="3.30.1130.10">
    <property type="match status" value="1"/>
</dbReference>
<dbReference type="HAMAP" id="MF_00223">
    <property type="entry name" value="FolE"/>
    <property type="match status" value="1"/>
</dbReference>
<dbReference type="InterPro" id="IPR043133">
    <property type="entry name" value="GTP-CH-I_C/QueF"/>
</dbReference>
<dbReference type="InterPro" id="IPR043134">
    <property type="entry name" value="GTP-CH-I_N"/>
</dbReference>
<dbReference type="InterPro" id="IPR001474">
    <property type="entry name" value="GTP_CycHdrlase_I"/>
</dbReference>
<dbReference type="InterPro" id="IPR018234">
    <property type="entry name" value="GTP_CycHdrlase_I_CS"/>
</dbReference>
<dbReference type="InterPro" id="IPR020602">
    <property type="entry name" value="GTP_CycHdrlase_I_dom"/>
</dbReference>
<dbReference type="NCBIfam" id="TIGR00063">
    <property type="entry name" value="folE"/>
    <property type="match status" value="1"/>
</dbReference>
<dbReference type="NCBIfam" id="NF006825">
    <property type="entry name" value="PRK09347.1-2"/>
    <property type="match status" value="1"/>
</dbReference>
<dbReference type="NCBIfam" id="NF006826">
    <property type="entry name" value="PRK09347.1-3"/>
    <property type="match status" value="1"/>
</dbReference>
<dbReference type="PANTHER" id="PTHR11109:SF7">
    <property type="entry name" value="GTP CYCLOHYDROLASE 1"/>
    <property type="match status" value="1"/>
</dbReference>
<dbReference type="PANTHER" id="PTHR11109">
    <property type="entry name" value="GTP CYCLOHYDROLASE I"/>
    <property type="match status" value="1"/>
</dbReference>
<dbReference type="Pfam" id="PF01227">
    <property type="entry name" value="GTP_cyclohydroI"/>
    <property type="match status" value="1"/>
</dbReference>
<dbReference type="SUPFAM" id="SSF55620">
    <property type="entry name" value="Tetrahydrobiopterin biosynthesis enzymes-like"/>
    <property type="match status" value="1"/>
</dbReference>
<dbReference type="PROSITE" id="PS00859">
    <property type="entry name" value="GTP_CYCLOHYDROL_1_1"/>
    <property type="match status" value="1"/>
</dbReference>
<protein>
    <recommendedName>
        <fullName evidence="1">GTP cyclohydrolase 1</fullName>
        <ecNumber evidence="1">3.5.4.16</ecNumber>
    </recommendedName>
    <alternativeName>
        <fullName evidence="1">GTP cyclohydrolase I</fullName>
        <shortName evidence="1">GTP-CH-I</shortName>
    </alternativeName>
</protein>
<evidence type="ECO:0000255" key="1">
    <source>
        <dbReference type="HAMAP-Rule" id="MF_00223"/>
    </source>
</evidence>
<gene>
    <name evidence="1" type="primary">folE</name>
    <name type="ordered locus">Ccel_1328</name>
</gene>
<name>GCH1_RUMCH</name>
<sequence length="195" mass="22164">MSIDRKKVEEHIRGLLVAIGENPDREGLKETPSRVAQMYQEVFEGISYTNDEIAEMFNKTFEEDLVIPKDNKEIVLVKDIDIFSYCEHHMALMYNMKVAVAYIPNDKILGLSKIARIADMVGKRLQLQERIGSDIAEIMQKITDSEDVAVIVEGQHACMTTRGIKNTGSRTTTTTLRGAFKTDTNLTNRLMMLYK</sequence>
<organism>
    <name type="scientific">Ruminiclostridium cellulolyticum (strain ATCC 35319 / DSM 5812 / JCM 6584 / H10)</name>
    <name type="common">Clostridium cellulolyticum</name>
    <dbReference type="NCBI Taxonomy" id="394503"/>
    <lineage>
        <taxon>Bacteria</taxon>
        <taxon>Bacillati</taxon>
        <taxon>Bacillota</taxon>
        <taxon>Clostridia</taxon>
        <taxon>Eubacteriales</taxon>
        <taxon>Oscillospiraceae</taxon>
        <taxon>Ruminiclostridium</taxon>
    </lineage>
</organism>
<feature type="chain" id="PRO_1000124914" description="GTP cyclohydrolase 1">
    <location>
        <begin position="1"/>
        <end position="195"/>
    </location>
</feature>
<feature type="binding site" evidence="1">
    <location>
        <position position="86"/>
    </location>
    <ligand>
        <name>Zn(2+)</name>
        <dbReference type="ChEBI" id="CHEBI:29105"/>
    </ligand>
</feature>
<feature type="binding site" evidence="1">
    <location>
        <position position="89"/>
    </location>
    <ligand>
        <name>Zn(2+)</name>
        <dbReference type="ChEBI" id="CHEBI:29105"/>
    </ligand>
</feature>
<feature type="binding site" evidence="1">
    <location>
        <position position="158"/>
    </location>
    <ligand>
        <name>Zn(2+)</name>
        <dbReference type="ChEBI" id="CHEBI:29105"/>
    </ligand>
</feature>